<organism evidence="12">
    <name type="scientific">Mus musculus</name>
    <name type="common">Mouse</name>
    <dbReference type="NCBI Taxonomy" id="10090"/>
    <lineage>
        <taxon>Eukaryota</taxon>
        <taxon>Metazoa</taxon>
        <taxon>Chordata</taxon>
        <taxon>Craniata</taxon>
        <taxon>Vertebrata</taxon>
        <taxon>Euteleostomi</taxon>
        <taxon>Mammalia</taxon>
        <taxon>Eutheria</taxon>
        <taxon>Euarchontoglires</taxon>
        <taxon>Glires</taxon>
        <taxon>Rodentia</taxon>
        <taxon>Myomorpha</taxon>
        <taxon>Muroidea</taxon>
        <taxon>Muridae</taxon>
        <taxon>Murinae</taxon>
        <taxon>Mus</taxon>
        <taxon>Mus</taxon>
    </lineage>
</organism>
<keyword id="KW-0002">3D-structure</keyword>
<keyword id="KW-0025">Alternative splicing</keyword>
<keyword id="KW-0053">Apoptosis</keyword>
<keyword id="KW-0067">ATP-binding</keyword>
<keyword id="KW-0112">Calmodulin-binding</keyword>
<keyword id="KW-0963">Cytoplasm</keyword>
<keyword id="KW-0968">Cytoplasmic vesicle</keyword>
<keyword id="KW-0418">Kinase</keyword>
<keyword id="KW-0547">Nucleotide-binding</keyword>
<keyword id="KW-0597">Phosphoprotein</keyword>
<keyword id="KW-1185">Reference proteome</keyword>
<keyword id="KW-0723">Serine/threonine-protein kinase</keyword>
<keyword id="KW-0808">Transferase</keyword>
<gene>
    <name type="primary">Dapk2</name>
</gene>
<reference evidence="13" key="1">
    <citation type="journal article" date="1999" name="Oncogene">
        <title>Death-associated protein kinase 2 is a new calcium/calmodulin-dependent protein kinase that signals apoptosis through its catalytic activity.</title>
        <authorList>
            <person name="Kawai T."/>
            <person name="Nomura F."/>
            <person name="Hoshino K."/>
            <person name="Copeland N.G."/>
            <person name="Gilbert D.J."/>
            <person name="Jenkins N.A."/>
            <person name="Akira S."/>
        </authorList>
    </citation>
    <scope>NUCLEOTIDE SEQUENCE [MRNA]</scope>
</reference>
<reference evidence="11" key="2">
    <citation type="journal article" date="2004" name="Genome Res.">
        <title>The status, quality, and expansion of the NIH full-length cDNA project: the Mammalian Gene Collection (MGC).</title>
        <authorList>
            <consortium name="The MGC Project Team"/>
        </authorList>
    </citation>
    <scope>NUCLEOTIDE SEQUENCE [LARGE SCALE MRNA]</scope>
</reference>
<reference evidence="11" key="3">
    <citation type="journal article" date="2000" name="Mol. Cell. Biol.">
        <title>Death-associated protein kinase-related protein 1, a novel serine/threonine kinase involved in apoptosis.</title>
        <authorList>
            <person name="Inbal B."/>
            <person name="Shani G."/>
            <person name="Cohen O."/>
            <person name="Kissil J.L."/>
            <person name="Kimchi A."/>
        </authorList>
    </citation>
    <scope>NUCLEOTIDE SEQUENCE [MRNA] OF 68-370</scope>
</reference>
<reference key="4">
    <citation type="journal article" date="2007" name="Proc. Natl. Acad. Sci. U.S.A.">
        <title>Large-scale phosphorylation analysis of mouse liver.</title>
        <authorList>
            <person name="Villen J."/>
            <person name="Beausoleil S.A."/>
            <person name="Gerber S.A."/>
            <person name="Gygi S.P."/>
        </authorList>
    </citation>
    <scope>PHOSPHORYLATION [LARGE SCALE ANALYSIS] AT SER-299 AND SER-349</scope>
    <scope>IDENTIFICATION BY MASS SPECTROMETRY [LARGE SCALE ANALYSIS]</scope>
    <source>
        <tissue>Liver</tissue>
    </source>
</reference>
<reference key="5">
    <citation type="journal article" date="2010" name="Cell">
        <title>A tissue-specific atlas of mouse protein phosphorylation and expression.</title>
        <authorList>
            <person name="Huttlin E.L."/>
            <person name="Jedrychowski M.P."/>
            <person name="Elias J.E."/>
            <person name="Goswami T."/>
            <person name="Rad R."/>
            <person name="Beausoleil S.A."/>
            <person name="Villen J."/>
            <person name="Haas W."/>
            <person name="Sowa M.E."/>
            <person name="Gygi S.P."/>
        </authorList>
    </citation>
    <scope>PHOSPHORYLATION [LARGE SCALE ANALYSIS] AT SER-299 AND SER-349</scope>
    <scope>IDENTIFICATION BY MASS SPECTROMETRY [LARGE SCALE ANALYSIS]</scope>
    <source>
        <tissue>Brain</tissue>
        <tissue>Brown adipose tissue</tissue>
        <tissue>Heart</tissue>
        <tissue>Kidney</tissue>
        <tissue>Liver</tissue>
        <tissue>Lung</tissue>
        <tissue>Pancreas</tissue>
        <tissue>Spleen</tissue>
        <tissue>Testis</tissue>
    </source>
</reference>
<reference key="6">
    <citation type="journal article" date="2011" name="PLoS ONE">
        <title>New modularity of DAP-kinases: alternative splicing of the DRP-1 gene produces a ZIPk-like isoform.</title>
        <authorList>
            <person name="Shoval Y."/>
            <person name="Berissi H."/>
            <person name="Kimchi A."/>
            <person name="Pietrokovski S."/>
        </authorList>
    </citation>
    <scope>ALTERNATIVE SPLICING (ISOFORM 2)</scope>
    <scope>TISSUE SPECIFICITY</scope>
</reference>
<reference key="7">
    <citation type="journal article" date="2015" name="Biochem. Biophys. Res. Commun.">
        <title>Suppression of death-associated protein kinase 2 by interaction with 14-3-3 proteins.</title>
        <authorList>
            <person name="Yuasa K."/>
            <person name="Ota R."/>
            <person name="Matsuda S."/>
            <person name="Isshiki K."/>
            <person name="Inoue M."/>
            <person name="Tsuji A."/>
        </authorList>
    </citation>
    <scope>INTERACTION WITH 14-3-3 PROTEINS</scope>
</reference>
<reference key="8">
    <citation type="journal article" date="2011" name="J. Mol. Biol.">
        <title>Structure of the dimeric autoinhibited conformation of DAPK2, a pro-apoptotic protein kinase.</title>
        <authorList>
            <person name="Patel A.K."/>
            <person name="Yadav R.P."/>
            <person name="Majava V."/>
            <person name="Kursula I."/>
            <person name="Kursula P."/>
        </authorList>
    </citation>
    <scope>X-RAY CRYSTALLOGRAPHY (1.90 ANGSTROMS) OF 11-370 IN COMPLEX WITH AMP AND ATP</scope>
    <scope>SUBUNIT</scope>
    <scope>ACTIVITY REGULATION</scope>
    <scope>AUTOINHIBITORY DOMAIN</scope>
</reference>
<reference key="9">
    <citation type="journal article" date="2014" name="BMC Res. Notes">
        <title>Death associated protein kinase 2 is expressed in cortical interstitial cells of the mouse kidney.</title>
        <authorList>
            <person name="Guay J.A."/>
            <person name="Wojchowski D.M."/>
            <person name="Fang J."/>
            <person name="Oxburgh L."/>
        </authorList>
    </citation>
    <scope>DISRUPTION PHENOTYPE</scope>
    <scope>TISSUE SPECIFICITY</scope>
</reference>
<reference key="10">
    <citation type="journal article" date="2014" name="J. Leukoc. Biol.">
        <title>DAPK2 positively regulates motility of neutrophils and eosinophils in response to intermediary chemoattractants.</title>
        <authorList>
            <person name="Geering B."/>
            <person name="Stoeckle C."/>
            <person name="Rozman S."/>
            <person name="Oberson K."/>
            <person name="Benarafa C."/>
            <person name="Simon H.U."/>
        </authorList>
    </citation>
    <scope>FUNCTION</scope>
</reference>
<evidence type="ECO:0000250" key="1"/>
<evidence type="ECO:0000250" key="2">
    <source>
        <dbReference type="UniProtKB" id="P53355"/>
    </source>
</evidence>
<evidence type="ECO:0000250" key="3">
    <source>
        <dbReference type="UniProtKB" id="Q9UIK4"/>
    </source>
</evidence>
<evidence type="ECO:0000255" key="4">
    <source>
        <dbReference type="PROSITE-ProRule" id="PRU00159"/>
    </source>
</evidence>
<evidence type="ECO:0000255" key="5">
    <source>
        <dbReference type="PROSITE-ProRule" id="PRU10027"/>
    </source>
</evidence>
<evidence type="ECO:0000269" key="6">
    <source>
    </source>
</evidence>
<evidence type="ECO:0000269" key="7">
    <source>
    </source>
</evidence>
<evidence type="ECO:0000269" key="8">
    <source>
    </source>
</evidence>
<evidence type="ECO:0000269" key="9">
    <source>
    </source>
</evidence>
<evidence type="ECO:0000269" key="10">
    <source>
    </source>
</evidence>
<evidence type="ECO:0000305" key="11"/>
<evidence type="ECO:0000312" key="12">
    <source>
        <dbReference type="EMBL" id="AAH22165.1"/>
    </source>
</evidence>
<evidence type="ECO:0000312" key="13">
    <source>
        <dbReference type="EMBL" id="BAA88064.1"/>
    </source>
</evidence>
<evidence type="ECO:0007744" key="14">
    <source>
    </source>
</evidence>
<evidence type="ECO:0007744" key="15">
    <source>
    </source>
</evidence>
<evidence type="ECO:0007829" key="16">
    <source>
        <dbReference type="PDB" id="2YA9"/>
    </source>
</evidence>
<evidence type="ECO:0007829" key="17">
    <source>
        <dbReference type="PDB" id="2YAB"/>
    </source>
</evidence>
<dbReference type="EC" id="2.7.11.1" evidence="3"/>
<dbReference type="EMBL" id="AB018002">
    <property type="protein sequence ID" value="BAA88064.1"/>
    <property type="molecule type" value="mRNA"/>
</dbReference>
<dbReference type="EMBL" id="BC022165">
    <property type="protein sequence ID" value="AAH22165.1"/>
    <property type="molecule type" value="mRNA"/>
</dbReference>
<dbReference type="EMBL" id="AF052942">
    <property type="protein sequence ID" value="AAC35002.1"/>
    <property type="molecule type" value="mRNA"/>
</dbReference>
<dbReference type="CCDS" id="CCDS23303.1">
    <molecule id="Q8VDF3-1"/>
</dbReference>
<dbReference type="RefSeq" id="NP_034149.2">
    <molecule id="Q8VDF3-1"/>
    <property type="nucleotide sequence ID" value="NM_010019.3"/>
</dbReference>
<dbReference type="PDB" id="2YA9">
    <property type="method" value="X-ray"/>
    <property type="resolution" value="2.30 A"/>
    <property type="chains" value="A/B=11-370"/>
</dbReference>
<dbReference type="PDB" id="2YAA">
    <property type="method" value="X-ray"/>
    <property type="resolution" value="2.30 A"/>
    <property type="chains" value="A/B=11-370"/>
</dbReference>
<dbReference type="PDB" id="2YAB">
    <property type="method" value="X-ray"/>
    <property type="resolution" value="1.90 A"/>
    <property type="chains" value="A/B=11-370"/>
</dbReference>
<dbReference type="PDBsum" id="2YA9"/>
<dbReference type="PDBsum" id="2YAA"/>
<dbReference type="PDBsum" id="2YAB"/>
<dbReference type="SMR" id="Q8VDF3"/>
<dbReference type="BioGRID" id="199051">
    <property type="interactions" value="2"/>
</dbReference>
<dbReference type="FunCoup" id="Q8VDF3">
    <property type="interactions" value="1016"/>
</dbReference>
<dbReference type="STRING" id="10090.ENSMUSP00000034944"/>
<dbReference type="iPTMnet" id="Q8VDF3"/>
<dbReference type="PhosphoSitePlus" id="Q8VDF3"/>
<dbReference type="jPOST" id="Q8VDF3"/>
<dbReference type="PaxDb" id="10090-ENSMUSP00000034944"/>
<dbReference type="ProteomicsDB" id="279821">
    <molecule id="Q8VDF3-1"/>
</dbReference>
<dbReference type="ProteomicsDB" id="279822">
    <molecule id="Q8VDF3-2"/>
</dbReference>
<dbReference type="Antibodypedia" id="13340">
    <property type="antibodies" value="631 antibodies from 41 providers"/>
</dbReference>
<dbReference type="DNASU" id="13143"/>
<dbReference type="Ensembl" id="ENSMUST00000034944.9">
    <molecule id="Q8VDF3-1"/>
    <property type="protein sequence ID" value="ENSMUSP00000034944.3"/>
    <property type="gene ID" value="ENSMUSG00000032380.10"/>
</dbReference>
<dbReference type="GeneID" id="13143"/>
<dbReference type="KEGG" id="mmu:13143"/>
<dbReference type="UCSC" id="uc009qen.2">
    <molecule id="Q8VDF3-1"/>
    <property type="organism name" value="mouse"/>
</dbReference>
<dbReference type="AGR" id="MGI:1341297"/>
<dbReference type="CTD" id="23604"/>
<dbReference type="MGI" id="MGI:1341297">
    <property type="gene designation" value="Dapk2"/>
</dbReference>
<dbReference type="VEuPathDB" id="HostDB:ENSMUSG00000032380"/>
<dbReference type="eggNOG" id="KOG0032">
    <property type="taxonomic scope" value="Eukaryota"/>
</dbReference>
<dbReference type="GeneTree" id="ENSGT00940000153424"/>
<dbReference type="HOGENOM" id="CLU_000288_63_0_1"/>
<dbReference type="InParanoid" id="Q8VDF3"/>
<dbReference type="OMA" id="RIENGHY"/>
<dbReference type="PhylomeDB" id="Q8VDF3"/>
<dbReference type="TreeFam" id="TF314166"/>
<dbReference type="BioGRID-ORCS" id="13143">
    <property type="hits" value="1 hit in 81 CRISPR screens"/>
</dbReference>
<dbReference type="EvolutionaryTrace" id="Q8VDF3"/>
<dbReference type="PRO" id="PR:Q8VDF3"/>
<dbReference type="Proteomes" id="UP000000589">
    <property type="component" value="Chromosome 9"/>
</dbReference>
<dbReference type="RNAct" id="Q8VDF3">
    <property type="molecule type" value="protein"/>
</dbReference>
<dbReference type="Bgee" id="ENSMUSG00000032380">
    <property type="expression patterns" value="Expressed in hindlimb stylopod muscle and 167 other cell types or tissues"/>
</dbReference>
<dbReference type="ExpressionAtlas" id="Q8VDF3">
    <property type="expression patterns" value="baseline and differential"/>
</dbReference>
<dbReference type="GO" id="GO:0034423">
    <property type="term" value="C:autophagosome lumen"/>
    <property type="evidence" value="ECO:0007669"/>
    <property type="project" value="UniProtKB-SubCell"/>
</dbReference>
<dbReference type="GO" id="GO:0005737">
    <property type="term" value="C:cytoplasm"/>
    <property type="evidence" value="ECO:0000250"/>
    <property type="project" value="UniProtKB"/>
</dbReference>
<dbReference type="GO" id="GO:0031410">
    <property type="term" value="C:cytoplasmic vesicle"/>
    <property type="evidence" value="ECO:0007669"/>
    <property type="project" value="UniProtKB-KW"/>
</dbReference>
<dbReference type="GO" id="GO:0005794">
    <property type="term" value="C:Golgi apparatus"/>
    <property type="evidence" value="ECO:0007669"/>
    <property type="project" value="Ensembl"/>
</dbReference>
<dbReference type="GO" id="GO:0005524">
    <property type="term" value="F:ATP binding"/>
    <property type="evidence" value="ECO:0000250"/>
    <property type="project" value="UniProtKB"/>
</dbReference>
<dbReference type="GO" id="GO:0005516">
    <property type="term" value="F:calmodulin binding"/>
    <property type="evidence" value="ECO:0000250"/>
    <property type="project" value="UniProtKB"/>
</dbReference>
<dbReference type="GO" id="GO:0042802">
    <property type="term" value="F:identical protein binding"/>
    <property type="evidence" value="ECO:0007669"/>
    <property type="project" value="Ensembl"/>
</dbReference>
<dbReference type="GO" id="GO:0106310">
    <property type="term" value="F:protein serine kinase activity"/>
    <property type="evidence" value="ECO:0007669"/>
    <property type="project" value="RHEA"/>
</dbReference>
<dbReference type="GO" id="GO:0004674">
    <property type="term" value="F:protein serine/threonine kinase activity"/>
    <property type="evidence" value="ECO:0007669"/>
    <property type="project" value="UniProtKB-KW"/>
</dbReference>
<dbReference type="GO" id="GO:0043276">
    <property type="term" value="P:anoikis"/>
    <property type="evidence" value="ECO:0007669"/>
    <property type="project" value="Ensembl"/>
</dbReference>
<dbReference type="GO" id="GO:0035556">
    <property type="term" value="P:intracellular signal transduction"/>
    <property type="evidence" value="ECO:0000250"/>
    <property type="project" value="UniProtKB"/>
</dbReference>
<dbReference type="GO" id="GO:1990266">
    <property type="term" value="P:neutrophil migration"/>
    <property type="evidence" value="ECO:0000315"/>
    <property type="project" value="UniProtKB"/>
</dbReference>
<dbReference type="GO" id="GO:2000424">
    <property type="term" value="P:positive regulation of eosinophil chemotaxis"/>
    <property type="evidence" value="ECO:0007669"/>
    <property type="project" value="Ensembl"/>
</dbReference>
<dbReference type="GO" id="GO:0090023">
    <property type="term" value="P:positive regulation of neutrophil chemotaxis"/>
    <property type="evidence" value="ECO:0007669"/>
    <property type="project" value="Ensembl"/>
</dbReference>
<dbReference type="GO" id="GO:0006468">
    <property type="term" value="P:protein phosphorylation"/>
    <property type="evidence" value="ECO:0000250"/>
    <property type="project" value="UniProtKB"/>
</dbReference>
<dbReference type="GO" id="GO:2001242">
    <property type="term" value="P:regulation of intrinsic apoptotic signaling pathway"/>
    <property type="evidence" value="ECO:0000250"/>
    <property type="project" value="UniProtKB"/>
</dbReference>
<dbReference type="CDD" id="cd14196">
    <property type="entry name" value="STKc_DAPK2"/>
    <property type="match status" value="1"/>
</dbReference>
<dbReference type="FunFam" id="3.30.200.20:FF:000110">
    <property type="entry name" value="Death-associated kinase 3, isoform CRA_a"/>
    <property type="match status" value="1"/>
</dbReference>
<dbReference type="FunFam" id="1.20.5.460:FF:000004">
    <property type="entry name" value="Death-associated protein kinase 2"/>
    <property type="match status" value="1"/>
</dbReference>
<dbReference type="FunFam" id="1.10.510.10:FF:000250">
    <property type="entry name" value="Death-associated protein kinase 3"/>
    <property type="match status" value="1"/>
</dbReference>
<dbReference type="Gene3D" id="3.30.200.20">
    <property type="entry name" value="Phosphorylase Kinase, domain 1"/>
    <property type="match status" value="1"/>
</dbReference>
<dbReference type="Gene3D" id="1.20.5.460">
    <property type="entry name" value="Single helix bin"/>
    <property type="match status" value="1"/>
</dbReference>
<dbReference type="Gene3D" id="1.10.510.10">
    <property type="entry name" value="Transferase(Phosphotransferase) domain 1"/>
    <property type="match status" value="1"/>
</dbReference>
<dbReference type="InterPro" id="IPR011009">
    <property type="entry name" value="Kinase-like_dom_sf"/>
</dbReference>
<dbReference type="InterPro" id="IPR000719">
    <property type="entry name" value="Prot_kinase_dom"/>
</dbReference>
<dbReference type="InterPro" id="IPR017441">
    <property type="entry name" value="Protein_kinase_ATP_BS"/>
</dbReference>
<dbReference type="InterPro" id="IPR008271">
    <property type="entry name" value="Ser/Thr_kinase_AS"/>
</dbReference>
<dbReference type="PANTHER" id="PTHR24342:SF15">
    <property type="entry name" value="DEATH-ASSOCIATED PROTEIN KINASE 2"/>
    <property type="match status" value="1"/>
</dbReference>
<dbReference type="PANTHER" id="PTHR24342">
    <property type="entry name" value="SERINE/THREONINE-PROTEIN KINASE 17"/>
    <property type="match status" value="1"/>
</dbReference>
<dbReference type="Pfam" id="PF00069">
    <property type="entry name" value="Pkinase"/>
    <property type="match status" value="1"/>
</dbReference>
<dbReference type="SMART" id="SM00220">
    <property type="entry name" value="S_TKc"/>
    <property type="match status" value="1"/>
</dbReference>
<dbReference type="SUPFAM" id="SSF56112">
    <property type="entry name" value="Protein kinase-like (PK-like)"/>
    <property type="match status" value="1"/>
</dbReference>
<dbReference type="PROSITE" id="PS00107">
    <property type="entry name" value="PROTEIN_KINASE_ATP"/>
    <property type="match status" value="1"/>
</dbReference>
<dbReference type="PROSITE" id="PS50011">
    <property type="entry name" value="PROTEIN_KINASE_DOM"/>
    <property type="match status" value="1"/>
</dbReference>
<dbReference type="PROSITE" id="PS00108">
    <property type="entry name" value="PROTEIN_KINASE_ST"/>
    <property type="match status" value="1"/>
</dbReference>
<feature type="chain" id="PRO_0000085913" description="Death-associated protein kinase 2">
    <location>
        <begin position="1"/>
        <end position="370"/>
    </location>
</feature>
<feature type="domain" description="Protein kinase" evidence="4">
    <location>
        <begin position="23"/>
        <end position="285"/>
    </location>
</feature>
<feature type="region of interest" description="Calmodulin-binding" evidence="1">
    <location>
        <begin position="287"/>
        <end position="354"/>
    </location>
</feature>
<feature type="region of interest" description="Autoinhibitory domain">
    <location>
        <begin position="292"/>
        <end position="301"/>
    </location>
</feature>
<feature type="active site" description="Proton acceptor" evidence="4 5">
    <location>
        <position position="149"/>
    </location>
</feature>
<feature type="binding site" evidence="4 7">
    <location>
        <begin position="29"/>
        <end position="37"/>
    </location>
    <ligand>
        <name>ATP</name>
        <dbReference type="ChEBI" id="CHEBI:30616"/>
    </ligand>
</feature>
<feature type="binding site" evidence="4 7">
    <location>
        <position position="52"/>
    </location>
    <ligand>
        <name>ATP</name>
        <dbReference type="ChEBI" id="CHEBI:30616"/>
    </ligand>
</feature>
<feature type="modified residue" description="Phosphoserine" evidence="14 15">
    <location>
        <position position="299"/>
    </location>
</feature>
<feature type="modified residue" description="Phosphoserine; by autocatalysis" evidence="3">
    <location>
        <position position="318"/>
    </location>
</feature>
<feature type="modified residue" description="Phosphoserine" evidence="14 15">
    <location>
        <position position="349"/>
    </location>
</feature>
<feature type="modified residue" description="Phosphothreonine" evidence="3">
    <location>
        <position position="369"/>
    </location>
</feature>
<feature type="splice variant" id="VSP_042058" description="In isoform 2." evidence="11">
    <original>TPVDTQQAMVRRESVVNLENFKKQYVRRRWKLSFSIVSLCNHLTRSLMKKVHLRTSEDLRNCESDTEENIARRKALHPRRRSSTS</original>
    <variation>SKGEARAPEQWKAQPAQLKTKRLREYTLKCHSSMPPNNTYVNFERFAHVVEDVARVDKGCRALAGAHDTLQDDVESLVSIYNEKEAWYREENENARHNLSQLKYEYRKVESLKKLLREDIQATGASLGGVARKLDHLQAQFETLRQQLSADIQWMQELVGIFQLESENTDSHSLGFMFHRDPSESLSELLNRSHAEEVLAGLSL</variation>
    <location>
        <begin position="286"/>
        <end position="370"/>
    </location>
</feature>
<feature type="sequence conflict" description="In Ref. 3; AAC35002." evidence="11" ref="3">
    <original>L</original>
    <variation>R</variation>
    <location>
        <position position="89"/>
    </location>
</feature>
<feature type="sequence conflict" description="In Ref. 1; BAA88064." evidence="11" ref="1">
    <original>H</original>
    <variation>Q</variation>
    <location>
        <position position="90"/>
    </location>
</feature>
<feature type="sequence conflict" description="In Ref. 3; AAC35002." evidence="11" ref="3">
    <original>T</original>
    <variation>P</variation>
    <location>
        <position position="270"/>
    </location>
</feature>
<feature type="sequence conflict" description="In Ref. 3; AAC35002." evidence="11" ref="3">
    <original>S</original>
    <variation>I</variation>
    <location>
        <position position="341"/>
    </location>
</feature>
<feature type="helix" evidence="17">
    <location>
        <begin position="19"/>
        <end position="21"/>
    </location>
</feature>
<feature type="strand" evidence="17">
    <location>
        <begin position="23"/>
        <end position="32"/>
    </location>
</feature>
<feature type="strand" evidence="17">
    <location>
        <begin position="35"/>
        <end position="42"/>
    </location>
</feature>
<feature type="turn" evidence="17">
    <location>
        <begin position="43"/>
        <end position="45"/>
    </location>
</feature>
<feature type="strand" evidence="17">
    <location>
        <begin position="48"/>
        <end position="56"/>
    </location>
</feature>
<feature type="strand" evidence="16">
    <location>
        <begin position="59"/>
        <end position="61"/>
    </location>
</feature>
<feature type="strand" evidence="17">
    <location>
        <begin position="63"/>
        <end position="66"/>
    </location>
</feature>
<feature type="helix" evidence="17">
    <location>
        <begin position="68"/>
        <end position="78"/>
    </location>
</feature>
<feature type="strand" evidence="17">
    <location>
        <begin position="89"/>
        <end position="94"/>
    </location>
</feature>
<feature type="strand" evidence="17">
    <location>
        <begin position="96"/>
        <end position="104"/>
    </location>
</feature>
<feature type="helix" evidence="17">
    <location>
        <begin position="111"/>
        <end position="115"/>
    </location>
</feature>
<feature type="helix" evidence="17">
    <location>
        <begin position="123"/>
        <end position="142"/>
    </location>
</feature>
<feature type="helix" evidence="17">
    <location>
        <begin position="152"/>
        <end position="154"/>
    </location>
</feature>
<feature type="strand" evidence="17">
    <location>
        <begin position="155"/>
        <end position="158"/>
    </location>
</feature>
<feature type="strand" evidence="17">
    <location>
        <begin position="162"/>
        <end position="164"/>
    </location>
</feature>
<feature type="strand" evidence="17">
    <location>
        <begin position="167"/>
        <end position="169"/>
    </location>
</feature>
<feature type="helix" evidence="17">
    <location>
        <begin position="191"/>
        <end position="193"/>
    </location>
</feature>
<feature type="helix" evidence="17">
    <location>
        <begin position="196"/>
        <end position="199"/>
    </location>
</feature>
<feature type="helix" evidence="17">
    <location>
        <begin position="207"/>
        <end position="222"/>
    </location>
</feature>
<feature type="helix" evidence="17">
    <location>
        <begin position="232"/>
        <end position="240"/>
    </location>
</feature>
<feature type="helix" evidence="17">
    <location>
        <begin position="248"/>
        <end position="251"/>
    </location>
</feature>
<feature type="helix" evidence="17">
    <location>
        <begin position="256"/>
        <end position="265"/>
    </location>
</feature>
<feature type="turn" evidence="17">
    <location>
        <begin position="270"/>
        <end position="272"/>
    </location>
</feature>
<feature type="helix" evidence="17">
    <location>
        <begin position="276"/>
        <end position="280"/>
    </location>
</feature>
<feature type="turn" evidence="17">
    <location>
        <begin position="283"/>
        <end position="285"/>
    </location>
</feature>
<feature type="helix" evidence="17">
    <location>
        <begin position="290"/>
        <end position="297"/>
    </location>
</feature>
<feature type="helix" evidence="17">
    <location>
        <begin position="303"/>
        <end position="309"/>
    </location>
</feature>
<proteinExistence type="evidence at protein level"/>
<sequence length="370" mass="42778">MVQASMRSPNMETFKQQKVEDFYDIGEELGSGQFAIVKKCREKSTGLEYAAKFIKKRQSRASRRGVCREEIEREVSILRQVLHPNIITLHDVYENRTDVVLILELVSGGELFDFLAQKESLSEEEATSFIKQILDGVNYLHTKKIAHFDLKPENIMLLDKNIPIPHIKLIDFGLAHEIEDGVEFKNIFGTPEFVAPEIVNYEPLGLEADMWSIGVITYILLSGASPFLGDTKQETLANITAVSYDFDEEFFSQTSELAKDFIRKLLVKETRKRLTIQEALRHPWITPVDTQQAMVRRESVVNLENFKKQYVRRRWKLSFSIVSLCNHLTRSLMKKVHLRTSEDLRNCESDTEENIARRKALHPRRRSSTS</sequence>
<accession>Q8VDF3</accession>
<accession>O88861</accession>
<accession>Q9QYM4</accession>
<comment type="function">
    <text evidence="3 8">Calcium/calmodulin-dependent serine/threonine kinase involved in multiple cellular signaling pathways that trigger cell survival, apoptosis, and autophagy. Capable of regulating both type I apoptotic and type II autophagic cell death signals. The former involves caspase activation, chromatin and mitochondrial condensation while the latter involves caspase-independent cell death in conjunction with accumulation of mature autophagic vesicles, plasma membrane blebs, and nuclear condensation without DNA degradation. Mediator of anoikis and a suppressor of beta-catenin-dependent anchorage-independent growth of malignant epithelial cells. May play a role in granulocytic maturation (By similarity). Regulates granulocytes motility by controlling cell spreading and polarization (PubMed:24163421).</text>
</comment>
<comment type="catalytic activity">
    <reaction evidence="3">
        <text>L-seryl-[protein] + ATP = O-phospho-L-seryl-[protein] + ADP + H(+)</text>
        <dbReference type="Rhea" id="RHEA:17989"/>
        <dbReference type="Rhea" id="RHEA-COMP:9863"/>
        <dbReference type="Rhea" id="RHEA-COMP:11604"/>
        <dbReference type="ChEBI" id="CHEBI:15378"/>
        <dbReference type="ChEBI" id="CHEBI:29999"/>
        <dbReference type="ChEBI" id="CHEBI:30616"/>
        <dbReference type="ChEBI" id="CHEBI:83421"/>
        <dbReference type="ChEBI" id="CHEBI:456216"/>
        <dbReference type="EC" id="2.7.11.1"/>
    </reaction>
</comment>
<comment type="catalytic activity">
    <reaction evidence="3">
        <text>L-threonyl-[protein] + ATP = O-phospho-L-threonyl-[protein] + ADP + H(+)</text>
        <dbReference type="Rhea" id="RHEA:46608"/>
        <dbReference type="Rhea" id="RHEA-COMP:11060"/>
        <dbReference type="Rhea" id="RHEA-COMP:11605"/>
        <dbReference type="ChEBI" id="CHEBI:15378"/>
        <dbReference type="ChEBI" id="CHEBI:30013"/>
        <dbReference type="ChEBI" id="CHEBI:30616"/>
        <dbReference type="ChEBI" id="CHEBI:61977"/>
        <dbReference type="ChEBI" id="CHEBI:456216"/>
        <dbReference type="EC" id="2.7.11.1"/>
    </reaction>
</comment>
<comment type="cofactor">
    <cofactor evidence="2">
        <name>Mg(2+)</name>
        <dbReference type="ChEBI" id="CHEBI:18420"/>
    </cofactor>
</comment>
<comment type="activity regulation">
    <text evidence="7">Activated by Ca(2+)/calmodulin. Regulated by a double locking mechanism, involving autophosphorylation at Ser-318, calmodulin binding, and dimerization. In the inactive state, Ser-318 is phosphorylated, and the kinase is dimeric. Activation involves: dephosphorylation at Ser-318, release-of-autoinhibition mechanism where calmodulin binding induces a conformational change that relieves the steric block of the active site by the autoinhibitory domain, and generation of the monomeric active form of the kinase.</text>
</comment>
<comment type="subunit">
    <text evidence="7 10">Homodimer in its autoinhibited state. Active as monomer. Interacts with 14-3-3 proteins YWHAB, YWHAE, YWHAG, YWHAH, YWHAQ, YWHAZ and SFN; the interaction requires DAPK2 phosphorylation at Thr-369 and suppresses DAPK2 kinase activity and DAPK2-induced apoptosis.</text>
</comment>
<comment type="subcellular location">
    <subcellularLocation>
        <location evidence="1">Cytoplasm</location>
    </subcellularLocation>
    <subcellularLocation>
        <location evidence="1">Cytoplasmic vesicle</location>
        <location evidence="1">Autophagosome lumen</location>
    </subcellularLocation>
</comment>
<comment type="alternative products">
    <event type="alternative splicing"/>
    <isoform>
        <id>Q8VDF3-1</id>
        <name>1</name>
        <name>Alpha</name>
        <sequence type="displayed"/>
    </isoform>
    <isoform>
        <id>Q8VDF3-2</id>
        <name>2</name>
        <name>Beta</name>
        <sequence type="described" ref="VSP_042058"/>
    </isoform>
</comment>
<comment type="tissue specificity">
    <text evidence="6 9">Expressed in peritubular interstitial cells of the renal cortex (PubMed:24906443). Isoform 1 is found in the adult brain while isoform 2 is expressed in brains of embryos and young mice (at protein level) (PubMed:21408167).</text>
</comment>
<comment type="domain">
    <text>The autoinhibitory domain sterically blocks the substrate peptide-binding site by making both hydrophobic and electrostatic contacts with the kinase core.</text>
</comment>
<comment type="PTM">
    <text evidence="3">Autophosphorylation at Ser-318 inhibits its catalytic activity. Dephosphorylated at Ser-318 in response to activated Fas and TNF-alpha receptors.</text>
</comment>
<comment type="disruption phenotype">
    <text evidence="9">No visible phenotype.</text>
</comment>
<comment type="similarity">
    <text evidence="11">Belongs to the protein kinase superfamily. CAMK Ser/Thr protein kinase family. DAP kinase subfamily.</text>
</comment>
<name>DAPK2_MOUSE</name>
<protein>
    <recommendedName>
        <fullName>Death-associated protein kinase 2</fullName>
        <shortName>DAP kinase 2</shortName>
        <ecNumber evidence="3">2.7.11.1</ecNumber>
    </recommendedName>
    <alternativeName>
        <fullName>DAP-kinase-related protein 1</fullName>
        <shortName>DRP-1</shortName>
    </alternativeName>
</protein>